<evidence type="ECO:0000255" key="1">
    <source>
        <dbReference type="HAMAP-Rule" id="MF_00183"/>
    </source>
</evidence>
<reference key="1">
    <citation type="journal article" date="2009" name="Appl. Environ. Microbiol.">
        <title>Rhizobium sp. strain NGR234 possesses a remarkable number of secretion systems.</title>
        <authorList>
            <person name="Schmeisser C."/>
            <person name="Liesegang H."/>
            <person name="Krysciak D."/>
            <person name="Bakkou N."/>
            <person name="Le Quere A."/>
            <person name="Wollherr A."/>
            <person name="Heinemeyer I."/>
            <person name="Morgenstern B."/>
            <person name="Pommerening-Roeser A."/>
            <person name="Flores M."/>
            <person name="Palacios R."/>
            <person name="Brenner S."/>
            <person name="Gottschalk G."/>
            <person name="Schmitz R.A."/>
            <person name="Broughton W.J."/>
            <person name="Perret X."/>
            <person name="Strittmatter A.W."/>
            <person name="Streit W.R."/>
        </authorList>
    </citation>
    <scope>NUCLEOTIDE SEQUENCE [LARGE SCALE GENOMIC DNA]</scope>
    <source>
        <strain>NBRC 101917 / NGR234</strain>
    </source>
</reference>
<comment type="function">
    <text evidence="1">Catalyzes the NADPH-dependent rearrangement and reduction of 1-deoxy-D-xylulose-5-phosphate (DXP) to 2-C-methyl-D-erythritol 4-phosphate (MEP).</text>
</comment>
<comment type="catalytic activity">
    <reaction evidence="1">
        <text>2-C-methyl-D-erythritol 4-phosphate + NADP(+) = 1-deoxy-D-xylulose 5-phosphate + NADPH + H(+)</text>
        <dbReference type="Rhea" id="RHEA:13717"/>
        <dbReference type="ChEBI" id="CHEBI:15378"/>
        <dbReference type="ChEBI" id="CHEBI:57783"/>
        <dbReference type="ChEBI" id="CHEBI:57792"/>
        <dbReference type="ChEBI" id="CHEBI:58262"/>
        <dbReference type="ChEBI" id="CHEBI:58349"/>
        <dbReference type="EC" id="1.1.1.267"/>
    </reaction>
    <physiologicalReaction direction="right-to-left" evidence="1">
        <dbReference type="Rhea" id="RHEA:13719"/>
    </physiologicalReaction>
</comment>
<comment type="cofactor">
    <cofactor evidence="1">
        <name>Mg(2+)</name>
        <dbReference type="ChEBI" id="CHEBI:18420"/>
    </cofactor>
    <cofactor evidence="1">
        <name>Mn(2+)</name>
        <dbReference type="ChEBI" id="CHEBI:29035"/>
    </cofactor>
</comment>
<comment type="pathway">
    <text evidence="1">Isoprenoid biosynthesis; isopentenyl diphosphate biosynthesis via DXP pathway; isopentenyl diphosphate from 1-deoxy-D-xylulose 5-phosphate: step 1/6.</text>
</comment>
<comment type="similarity">
    <text evidence="1">Belongs to the DXR family.</text>
</comment>
<keyword id="KW-0414">Isoprene biosynthesis</keyword>
<keyword id="KW-0464">Manganese</keyword>
<keyword id="KW-0479">Metal-binding</keyword>
<keyword id="KW-0521">NADP</keyword>
<keyword id="KW-0560">Oxidoreductase</keyword>
<keyword id="KW-1185">Reference proteome</keyword>
<gene>
    <name evidence="1" type="primary">dxr</name>
    <name type="ordered locus">NGR_c30680</name>
</gene>
<name>DXR_SINFN</name>
<proteinExistence type="inferred from homology"/>
<sequence>MASGDESKRRLTILGSTGSIGTNTLDVVERLGGRNRFEIAALTGNGNIPLLADQARRMGAELAVTADEHRYGELKDALGGSGIEVAAGRSGLIEAAERDAGWLMAAIVGNAGLGPTLAAARRGADIALANKECLVSAGSLFIEAVAKGGGRLLPVDSEHNAIFQVLENDQRHAVERIILTASGGPFRTKSLEEMRHVTADIARAHPNWSMGLKISIDSASMFNKALEMIEARHLFRLRPDQIEVIVHPQSVIHSMVGYSDGSVLAQLGCPDMRTAIGYALTYPKRCDLPIERLDFAKLARLDFEAPDEARFPALRLARRAMQAGGIQGAVLNGAKETALEAFIKGRIGFLAMAEIVEKVMDRLSDLPAAVTMDDVFAADEKARLTAAGLIQ</sequence>
<dbReference type="EC" id="1.1.1.267" evidence="1"/>
<dbReference type="EMBL" id="CP001389">
    <property type="protein sequence ID" value="ACP26803.1"/>
    <property type="molecule type" value="Genomic_DNA"/>
</dbReference>
<dbReference type="RefSeq" id="WP_012709556.1">
    <property type="nucleotide sequence ID" value="NC_012587.1"/>
</dbReference>
<dbReference type="RefSeq" id="YP_002827556.1">
    <property type="nucleotide sequence ID" value="NC_012587.1"/>
</dbReference>
<dbReference type="SMR" id="C3M9M8"/>
<dbReference type="STRING" id="394.NGR_c30680"/>
<dbReference type="KEGG" id="rhi:NGR_c30680"/>
<dbReference type="PATRIC" id="fig|394.7.peg.5904"/>
<dbReference type="eggNOG" id="COG0743">
    <property type="taxonomic scope" value="Bacteria"/>
</dbReference>
<dbReference type="HOGENOM" id="CLU_035714_4_0_5"/>
<dbReference type="OrthoDB" id="9806546at2"/>
<dbReference type="UniPathway" id="UPA00056">
    <property type="reaction ID" value="UER00092"/>
</dbReference>
<dbReference type="Proteomes" id="UP000001054">
    <property type="component" value="Chromosome"/>
</dbReference>
<dbReference type="GO" id="GO:0030604">
    <property type="term" value="F:1-deoxy-D-xylulose-5-phosphate reductoisomerase activity"/>
    <property type="evidence" value="ECO:0007669"/>
    <property type="project" value="UniProtKB-UniRule"/>
</dbReference>
<dbReference type="GO" id="GO:0030145">
    <property type="term" value="F:manganese ion binding"/>
    <property type="evidence" value="ECO:0007669"/>
    <property type="project" value="TreeGrafter"/>
</dbReference>
<dbReference type="GO" id="GO:0070402">
    <property type="term" value="F:NADPH binding"/>
    <property type="evidence" value="ECO:0007669"/>
    <property type="project" value="InterPro"/>
</dbReference>
<dbReference type="GO" id="GO:0051484">
    <property type="term" value="P:isopentenyl diphosphate biosynthetic process, methylerythritol 4-phosphate pathway involved in terpenoid biosynthetic process"/>
    <property type="evidence" value="ECO:0007669"/>
    <property type="project" value="TreeGrafter"/>
</dbReference>
<dbReference type="FunFam" id="3.40.50.720:FF:000045">
    <property type="entry name" value="1-deoxy-D-xylulose 5-phosphate reductoisomerase"/>
    <property type="match status" value="1"/>
</dbReference>
<dbReference type="Gene3D" id="1.10.1740.10">
    <property type="match status" value="1"/>
</dbReference>
<dbReference type="Gene3D" id="3.40.50.720">
    <property type="entry name" value="NAD(P)-binding Rossmann-like Domain"/>
    <property type="match status" value="1"/>
</dbReference>
<dbReference type="HAMAP" id="MF_00183">
    <property type="entry name" value="DXP_reductoisom"/>
    <property type="match status" value="1"/>
</dbReference>
<dbReference type="InterPro" id="IPR003821">
    <property type="entry name" value="DXP_reductoisomerase"/>
</dbReference>
<dbReference type="InterPro" id="IPR013644">
    <property type="entry name" value="DXP_reductoisomerase_C"/>
</dbReference>
<dbReference type="InterPro" id="IPR013512">
    <property type="entry name" value="DXP_reductoisomerase_N"/>
</dbReference>
<dbReference type="InterPro" id="IPR026877">
    <property type="entry name" value="DXPR_C"/>
</dbReference>
<dbReference type="InterPro" id="IPR036169">
    <property type="entry name" value="DXPR_C_sf"/>
</dbReference>
<dbReference type="InterPro" id="IPR036291">
    <property type="entry name" value="NAD(P)-bd_dom_sf"/>
</dbReference>
<dbReference type="NCBIfam" id="TIGR00243">
    <property type="entry name" value="Dxr"/>
    <property type="match status" value="1"/>
</dbReference>
<dbReference type="PANTHER" id="PTHR30525">
    <property type="entry name" value="1-DEOXY-D-XYLULOSE 5-PHOSPHATE REDUCTOISOMERASE"/>
    <property type="match status" value="1"/>
</dbReference>
<dbReference type="PANTHER" id="PTHR30525:SF0">
    <property type="entry name" value="1-DEOXY-D-XYLULOSE 5-PHOSPHATE REDUCTOISOMERASE, CHLOROPLASTIC"/>
    <property type="match status" value="1"/>
</dbReference>
<dbReference type="Pfam" id="PF08436">
    <property type="entry name" value="DXP_redisom_C"/>
    <property type="match status" value="1"/>
</dbReference>
<dbReference type="Pfam" id="PF02670">
    <property type="entry name" value="DXP_reductoisom"/>
    <property type="match status" value="1"/>
</dbReference>
<dbReference type="Pfam" id="PF13288">
    <property type="entry name" value="DXPR_C"/>
    <property type="match status" value="1"/>
</dbReference>
<dbReference type="PIRSF" id="PIRSF006205">
    <property type="entry name" value="Dxp_reductismrs"/>
    <property type="match status" value="1"/>
</dbReference>
<dbReference type="SUPFAM" id="SSF69055">
    <property type="entry name" value="1-deoxy-D-xylulose-5-phosphate reductoisomerase, C-terminal domain"/>
    <property type="match status" value="1"/>
</dbReference>
<dbReference type="SUPFAM" id="SSF55347">
    <property type="entry name" value="Glyceraldehyde-3-phosphate dehydrogenase-like, C-terminal domain"/>
    <property type="match status" value="1"/>
</dbReference>
<dbReference type="SUPFAM" id="SSF51735">
    <property type="entry name" value="NAD(P)-binding Rossmann-fold domains"/>
    <property type="match status" value="1"/>
</dbReference>
<accession>C3M9M8</accession>
<feature type="chain" id="PRO_1000124107" description="1-deoxy-D-xylulose 5-phosphate reductoisomerase">
    <location>
        <begin position="1"/>
        <end position="391"/>
    </location>
</feature>
<feature type="binding site" evidence="1">
    <location>
        <position position="17"/>
    </location>
    <ligand>
        <name>NADPH</name>
        <dbReference type="ChEBI" id="CHEBI:57783"/>
    </ligand>
</feature>
<feature type="binding site" evidence="1">
    <location>
        <position position="18"/>
    </location>
    <ligand>
        <name>NADPH</name>
        <dbReference type="ChEBI" id="CHEBI:57783"/>
    </ligand>
</feature>
<feature type="binding site" evidence="1">
    <location>
        <position position="19"/>
    </location>
    <ligand>
        <name>NADPH</name>
        <dbReference type="ChEBI" id="CHEBI:57783"/>
    </ligand>
</feature>
<feature type="binding site" evidence="1">
    <location>
        <position position="20"/>
    </location>
    <ligand>
        <name>NADPH</name>
        <dbReference type="ChEBI" id="CHEBI:57783"/>
    </ligand>
</feature>
<feature type="binding site" evidence="1">
    <location>
        <position position="47"/>
    </location>
    <ligand>
        <name>NADPH</name>
        <dbReference type="ChEBI" id="CHEBI:57783"/>
    </ligand>
</feature>
<feature type="binding site" evidence="1">
    <location>
        <position position="130"/>
    </location>
    <ligand>
        <name>NADPH</name>
        <dbReference type="ChEBI" id="CHEBI:57783"/>
    </ligand>
</feature>
<feature type="binding site" evidence="1">
    <location>
        <position position="131"/>
    </location>
    <ligand>
        <name>1-deoxy-D-xylulose 5-phosphate</name>
        <dbReference type="ChEBI" id="CHEBI:57792"/>
    </ligand>
</feature>
<feature type="binding site" evidence="1">
    <location>
        <position position="132"/>
    </location>
    <ligand>
        <name>NADPH</name>
        <dbReference type="ChEBI" id="CHEBI:57783"/>
    </ligand>
</feature>
<feature type="binding site" evidence="1">
    <location>
        <position position="156"/>
    </location>
    <ligand>
        <name>Mn(2+)</name>
        <dbReference type="ChEBI" id="CHEBI:29035"/>
    </ligand>
</feature>
<feature type="binding site" evidence="1">
    <location>
        <position position="157"/>
    </location>
    <ligand>
        <name>1-deoxy-D-xylulose 5-phosphate</name>
        <dbReference type="ChEBI" id="CHEBI:57792"/>
    </ligand>
</feature>
<feature type="binding site" evidence="1">
    <location>
        <position position="158"/>
    </location>
    <ligand>
        <name>1-deoxy-D-xylulose 5-phosphate</name>
        <dbReference type="ChEBI" id="CHEBI:57792"/>
    </ligand>
</feature>
<feature type="binding site" evidence="1">
    <location>
        <position position="158"/>
    </location>
    <ligand>
        <name>Mn(2+)</name>
        <dbReference type="ChEBI" id="CHEBI:29035"/>
    </ligand>
</feature>
<feature type="binding site" evidence="1">
    <location>
        <position position="182"/>
    </location>
    <ligand>
        <name>1-deoxy-D-xylulose 5-phosphate</name>
        <dbReference type="ChEBI" id="CHEBI:57792"/>
    </ligand>
</feature>
<feature type="binding site" evidence="1">
    <location>
        <position position="205"/>
    </location>
    <ligand>
        <name>1-deoxy-D-xylulose 5-phosphate</name>
        <dbReference type="ChEBI" id="CHEBI:57792"/>
    </ligand>
</feature>
<feature type="binding site" evidence="1">
    <location>
        <position position="211"/>
    </location>
    <ligand>
        <name>NADPH</name>
        <dbReference type="ChEBI" id="CHEBI:57783"/>
    </ligand>
</feature>
<feature type="binding site" evidence="1">
    <location>
        <position position="218"/>
    </location>
    <ligand>
        <name>1-deoxy-D-xylulose 5-phosphate</name>
        <dbReference type="ChEBI" id="CHEBI:57792"/>
    </ligand>
</feature>
<feature type="binding site" evidence="1">
    <location>
        <position position="223"/>
    </location>
    <ligand>
        <name>1-deoxy-D-xylulose 5-phosphate</name>
        <dbReference type="ChEBI" id="CHEBI:57792"/>
    </ligand>
</feature>
<feature type="binding site" evidence="1">
    <location>
        <position position="224"/>
    </location>
    <ligand>
        <name>1-deoxy-D-xylulose 5-phosphate</name>
        <dbReference type="ChEBI" id="CHEBI:57792"/>
    </ligand>
</feature>
<feature type="binding site" evidence="1">
    <location>
        <position position="227"/>
    </location>
    <ligand>
        <name>1-deoxy-D-xylulose 5-phosphate</name>
        <dbReference type="ChEBI" id="CHEBI:57792"/>
    </ligand>
</feature>
<feature type="binding site" evidence="1">
    <location>
        <position position="227"/>
    </location>
    <ligand>
        <name>Mn(2+)</name>
        <dbReference type="ChEBI" id="CHEBI:29035"/>
    </ligand>
</feature>
<protein>
    <recommendedName>
        <fullName evidence="1">1-deoxy-D-xylulose 5-phosphate reductoisomerase</fullName>
        <shortName evidence="1">DXP reductoisomerase</shortName>
        <ecNumber evidence="1">1.1.1.267</ecNumber>
    </recommendedName>
    <alternativeName>
        <fullName evidence="1">1-deoxyxylulose-5-phosphate reductoisomerase</fullName>
    </alternativeName>
    <alternativeName>
        <fullName evidence="1">2-C-methyl-D-erythritol 4-phosphate synthase</fullName>
    </alternativeName>
</protein>
<organism>
    <name type="scientific">Sinorhizobium fredii (strain NBRC 101917 / NGR234)</name>
    <dbReference type="NCBI Taxonomy" id="394"/>
    <lineage>
        <taxon>Bacteria</taxon>
        <taxon>Pseudomonadati</taxon>
        <taxon>Pseudomonadota</taxon>
        <taxon>Alphaproteobacteria</taxon>
        <taxon>Hyphomicrobiales</taxon>
        <taxon>Rhizobiaceae</taxon>
        <taxon>Sinorhizobium/Ensifer group</taxon>
        <taxon>Sinorhizobium</taxon>
    </lineage>
</organism>